<proteinExistence type="inferred from homology"/>
<keyword id="KW-1185">Reference proteome</keyword>
<keyword id="KW-0687">Ribonucleoprotein</keyword>
<keyword id="KW-0689">Ribosomal protein</keyword>
<accession>A8G1E0</accession>
<feature type="chain" id="PRO_1000079907" description="Large ribosomal subunit protein uL29">
    <location>
        <begin position="1"/>
        <end position="63"/>
    </location>
</feature>
<comment type="similarity">
    <text evidence="1">Belongs to the universal ribosomal protein uL29 family.</text>
</comment>
<protein>
    <recommendedName>
        <fullName evidence="1">Large ribosomal subunit protein uL29</fullName>
    </recommendedName>
    <alternativeName>
        <fullName evidence="2">50S ribosomal protein L29</fullName>
    </alternativeName>
</protein>
<sequence length="63" mass="7115">MKASELTEKSVEELNAELLGLLREQFNLRMQHATGQLTQTHQLKIVRRNIARVKTIITSKAGA</sequence>
<evidence type="ECO:0000255" key="1">
    <source>
        <dbReference type="HAMAP-Rule" id="MF_00374"/>
    </source>
</evidence>
<evidence type="ECO:0000305" key="2"/>
<organism>
    <name type="scientific">Shewanella sediminis (strain HAW-EB3)</name>
    <dbReference type="NCBI Taxonomy" id="425104"/>
    <lineage>
        <taxon>Bacteria</taxon>
        <taxon>Pseudomonadati</taxon>
        <taxon>Pseudomonadota</taxon>
        <taxon>Gammaproteobacteria</taxon>
        <taxon>Alteromonadales</taxon>
        <taxon>Shewanellaceae</taxon>
        <taxon>Shewanella</taxon>
    </lineage>
</organism>
<name>RL29_SHESH</name>
<gene>
    <name evidence="1" type="primary">rpmC</name>
    <name type="ordered locus">Ssed_4309</name>
</gene>
<dbReference type="EMBL" id="CP000821">
    <property type="protein sequence ID" value="ABV38913.1"/>
    <property type="molecule type" value="Genomic_DNA"/>
</dbReference>
<dbReference type="RefSeq" id="WP_012144642.1">
    <property type="nucleotide sequence ID" value="NC_009831.1"/>
</dbReference>
<dbReference type="SMR" id="A8G1E0"/>
<dbReference type="STRING" id="425104.Ssed_4309"/>
<dbReference type="KEGG" id="sse:Ssed_4309"/>
<dbReference type="eggNOG" id="COG0255">
    <property type="taxonomic scope" value="Bacteria"/>
</dbReference>
<dbReference type="HOGENOM" id="CLU_158491_1_2_6"/>
<dbReference type="OrthoDB" id="9815192at2"/>
<dbReference type="Proteomes" id="UP000002015">
    <property type="component" value="Chromosome"/>
</dbReference>
<dbReference type="GO" id="GO:0022625">
    <property type="term" value="C:cytosolic large ribosomal subunit"/>
    <property type="evidence" value="ECO:0007669"/>
    <property type="project" value="TreeGrafter"/>
</dbReference>
<dbReference type="GO" id="GO:0003735">
    <property type="term" value="F:structural constituent of ribosome"/>
    <property type="evidence" value="ECO:0007669"/>
    <property type="project" value="InterPro"/>
</dbReference>
<dbReference type="GO" id="GO:0006412">
    <property type="term" value="P:translation"/>
    <property type="evidence" value="ECO:0007669"/>
    <property type="project" value="UniProtKB-UniRule"/>
</dbReference>
<dbReference type="CDD" id="cd00427">
    <property type="entry name" value="Ribosomal_L29_HIP"/>
    <property type="match status" value="1"/>
</dbReference>
<dbReference type="FunFam" id="1.10.287.310:FF:000001">
    <property type="entry name" value="50S ribosomal protein L29"/>
    <property type="match status" value="1"/>
</dbReference>
<dbReference type="Gene3D" id="1.10.287.310">
    <property type="match status" value="1"/>
</dbReference>
<dbReference type="HAMAP" id="MF_00374">
    <property type="entry name" value="Ribosomal_uL29"/>
    <property type="match status" value="1"/>
</dbReference>
<dbReference type="InterPro" id="IPR050063">
    <property type="entry name" value="Ribosomal_protein_uL29"/>
</dbReference>
<dbReference type="InterPro" id="IPR001854">
    <property type="entry name" value="Ribosomal_uL29"/>
</dbReference>
<dbReference type="InterPro" id="IPR018254">
    <property type="entry name" value="Ribosomal_uL29_CS"/>
</dbReference>
<dbReference type="InterPro" id="IPR036049">
    <property type="entry name" value="Ribosomal_uL29_sf"/>
</dbReference>
<dbReference type="NCBIfam" id="TIGR00012">
    <property type="entry name" value="L29"/>
    <property type="match status" value="1"/>
</dbReference>
<dbReference type="PANTHER" id="PTHR10916">
    <property type="entry name" value="60S RIBOSOMAL PROTEIN L35/50S RIBOSOMAL PROTEIN L29"/>
    <property type="match status" value="1"/>
</dbReference>
<dbReference type="PANTHER" id="PTHR10916:SF0">
    <property type="entry name" value="LARGE RIBOSOMAL SUBUNIT PROTEIN UL29C"/>
    <property type="match status" value="1"/>
</dbReference>
<dbReference type="Pfam" id="PF00831">
    <property type="entry name" value="Ribosomal_L29"/>
    <property type="match status" value="1"/>
</dbReference>
<dbReference type="SUPFAM" id="SSF46561">
    <property type="entry name" value="Ribosomal protein L29 (L29p)"/>
    <property type="match status" value="1"/>
</dbReference>
<dbReference type="PROSITE" id="PS00579">
    <property type="entry name" value="RIBOSOMAL_L29"/>
    <property type="match status" value="1"/>
</dbReference>
<reference key="1">
    <citation type="submission" date="2007-08" db="EMBL/GenBank/DDBJ databases">
        <title>Complete sequence of Shewanella sediminis HAW-EB3.</title>
        <authorList>
            <consortium name="US DOE Joint Genome Institute"/>
            <person name="Copeland A."/>
            <person name="Lucas S."/>
            <person name="Lapidus A."/>
            <person name="Barry K."/>
            <person name="Glavina del Rio T."/>
            <person name="Dalin E."/>
            <person name="Tice H."/>
            <person name="Pitluck S."/>
            <person name="Chertkov O."/>
            <person name="Brettin T."/>
            <person name="Bruce D."/>
            <person name="Detter J.C."/>
            <person name="Han C."/>
            <person name="Schmutz J."/>
            <person name="Larimer F."/>
            <person name="Land M."/>
            <person name="Hauser L."/>
            <person name="Kyrpides N."/>
            <person name="Kim E."/>
            <person name="Zhao J.-S."/>
            <person name="Richardson P."/>
        </authorList>
    </citation>
    <scope>NUCLEOTIDE SEQUENCE [LARGE SCALE GENOMIC DNA]</scope>
    <source>
        <strain>HAW-EB3</strain>
    </source>
</reference>